<accession>Q6G7K8</accession>
<proteinExistence type="inferred from homology"/>
<comment type="function">
    <text evidence="1">Produces ATP from ADP in the presence of a proton gradient across the membrane.</text>
</comment>
<comment type="subunit">
    <text>F-type ATPases have 2 components, CF(1) - the catalytic core - and CF(0) - the membrane proton channel. CF(1) has five subunits: alpha(3), beta(3), gamma(1), delta(1), epsilon(1). CF(0) has three main subunits: a, b and c.</text>
</comment>
<comment type="subcellular location">
    <subcellularLocation>
        <location evidence="1">Cell membrane</location>
        <topology evidence="1">Peripheral membrane protein</topology>
    </subcellularLocation>
</comment>
<comment type="similarity">
    <text evidence="1">Belongs to the ATPase epsilon chain family.</text>
</comment>
<keyword id="KW-0066">ATP synthesis</keyword>
<keyword id="KW-1003">Cell membrane</keyword>
<keyword id="KW-0139">CF(1)</keyword>
<keyword id="KW-0375">Hydrogen ion transport</keyword>
<keyword id="KW-0406">Ion transport</keyword>
<keyword id="KW-0472">Membrane</keyword>
<keyword id="KW-0813">Transport</keyword>
<name>ATPE_STAAS</name>
<gene>
    <name evidence="1" type="primary">atpC</name>
    <name type="ordered locus">SAS2005</name>
</gene>
<protein>
    <recommendedName>
        <fullName evidence="1">ATP synthase epsilon chain</fullName>
    </recommendedName>
    <alternativeName>
        <fullName evidence="1">ATP synthase F1 sector epsilon subunit</fullName>
    </alternativeName>
    <alternativeName>
        <fullName evidence="1">F-ATPase epsilon subunit</fullName>
    </alternativeName>
</protein>
<dbReference type="EMBL" id="BX571857">
    <property type="protein sequence ID" value="CAG43813.1"/>
    <property type="molecule type" value="Genomic_DNA"/>
</dbReference>
<dbReference type="RefSeq" id="WP_001094394.1">
    <property type="nucleotide sequence ID" value="NC_002953.3"/>
</dbReference>
<dbReference type="SMR" id="Q6G7K8"/>
<dbReference type="KEGG" id="sas:SAS2005"/>
<dbReference type="HOGENOM" id="CLU_084338_1_3_9"/>
<dbReference type="GO" id="GO:0005886">
    <property type="term" value="C:plasma membrane"/>
    <property type="evidence" value="ECO:0007669"/>
    <property type="project" value="UniProtKB-SubCell"/>
</dbReference>
<dbReference type="GO" id="GO:0045259">
    <property type="term" value="C:proton-transporting ATP synthase complex"/>
    <property type="evidence" value="ECO:0007669"/>
    <property type="project" value="UniProtKB-KW"/>
</dbReference>
<dbReference type="GO" id="GO:0005524">
    <property type="term" value="F:ATP binding"/>
    <property type="evidence" value="ECO:0007669"/>
    <property type="project" value="UniProtKB-UniRule"/>
</dbReference>
<dbReference type="GO" id="GO:0046933">
    <property type="term" value="F:proton-transporting ATP synthase activity, rotational mechanism"/>
    <property type="evidence" value="ECO:0007669"/>
    <property type="project" value="UniProtKB-UniRule"/>
</dbReference>
<dbReference type="CDD" id="cd12152">
    <property type="entry name" value="F1-ATPase_delta"/>
    <property type="match status" value="1"/>
</dbReference>
<dbReference type="FunFam" id="1.20.5.440:FF:000001">
    <property type="entry name" value="ATP synthase epsilon chain"/>
    <property type="match status" value="1"/>
</dbReference>
<dbReference type="FunFam" id="2.60.15.10:FF:000001">
    <property type="entry name" value="ATP synthase epsilon chain"/>
    <property type="match status" value="1"/>
</dbReference>
<dbReference type="Gene3D" id="1.20.5.440">
    <property type="entry name" value="ATP synthase delta/epsilon subunit, C-terminal domain"/>
    <property type="match status" value="1"/>
</dbReference>
<dbReference type="Gene3D" id="2.60.15.10">
    <property type="entry name" value="F0F1 ATP synthase delta/epsilon subunit, N-terminal"/>
    <property type="match status" value="1"/>
</dbReference>
<dbReference type="HAMAP" id="MF_00530">
    <property type="entry name" value="ATP_synth_epsil_bac"/>
    <property type="match status" value="1"/>
</dbReference>
<dbReference type="InterPro" id="IPR036794">
    <property type="entry name" value="ATP_F1_dsu/esu_C_sf"/>
</dbReference>
<dbReference type="InterPro" id="IPR001469">
    <property type="entry name" value="ATP_synth_F1_dsu/esu"/>
</dbReference>
<dbReference type="InterPro" id="IPR020546">
    <property type="entry name" value="ATP_synth_F1_dsu/esu_N"/>
</dbReference>
<dbReference type="InterPro" id="IPR020547">
    <property type="entry name" value="ATP_synth_F1_esu_C"/>
</dbReference>
<dbReference type="InterPro" id="IPR036771">
    <property type="entry name" value="ATPsynth_dsu/esu_N"/>
</dbReference>
<dbReference type="NCBIfam" id="TIGR01216">
    <property type="entry name" value="ATP_synt_epsi"/>
    <property type="match status" value="1"/>
</dbReference>
<dbReference type="NCBIfam" id="NF001846">
    <property type="entry name" value="PRK00571.1-3"/>
    <property type="match status" value="1"/>
</dbReference>
<dbReference type="NCBIfam" id="NF009980">
    <property type="entry name" value="PRK13446.1"/>
    <property type="match status" value="1"/>
</dbReference>
<dbReference type="PANTHER" id="PTHR13822">
    <property type="entry name" value="ATP SYNTHASE DELTA/EPSILON CHAIN"/>
    <property type="match status" value="1"/>
</dbReference>
<dbReference type="PANTHER" id="PTHR13822:SF10">
    <property type="entry name" value="ATP SYNTHASE EPSILON CHAIN, CHLOROPLASTIC"/>
    <property type="match status" value="1"/>
</dbReference>
<dbReference type="Pfam" id="PF00401">
    <property type="entry name" value="ATP-synt_DE"/>
    <property type="match status" value="1"/>
</dbReference>
<dbReference type="Pfam" id="PF02823">
    <property type="entry name" value="ATP-synt_DE_N"/>
    <property type="match status" value="1"/>
</dbReference>
<dbReference type="SUPFAM" id="SSF46604">
    <property type="entry name" value="Epsilon subunit of F1F0-ATP synthase C-terminal domain"/>
    <property type="match status" value="1"/>
</dbReference>
<dbReference type="SUPFAM" id="SSF51344">
    <property type="entry name" value="Epsilon subunit of F1F0-ATP synthase N-terminal domain"/>
    <property type="match status" value="1"/>
</dbReference>
<sequence>MNTLNLDIVTPNGSVYNRDNVELVVMQTTAGEIGVMSGHIPTVAALKTGFVKVKFHDGTEYIAVSDGFVEVRKDKVSIIVQTAETAREIDVERAKLAKARAESHLENDDDNTDIHRAERALERANNRLRVAELK</sequence>
<evidence type="ECO:0000255" key="1">
    <source>
        <dbReference type="HAMAP-Rule" id="MF_00530"/>
    </source>
</evidence>
<organism>
    <name type="scientific">Staphylococcus aureus (strain MSSA476)</name>
    <dbReference type="NCBI Taxonomy" id="282459"/>
    <lineage>
        <taxon>Bacteria</taxon>
        <taxon>Bacillati</taxon>
        <taxon>Bacillota</taxon>
        <taxon>Bacilli</taxon>
        <taxon>Bacillales</taxon>
        <taxon>Staphylococcaceae</taxon>
        <taxon>Staphylococcus</taxon>
    </lineage>
</organism>
<feature type="chain" id="PRO_0000188204" description="ATP synthase epsilon chain">
    <location>
        <begin position="1"/>
        <end position="134"/>
    </location>
</feature>
<reference key="1">
    <citation type="journal article" date="2004" name="Proc. Natl. Acad. Sci. U.S.A.">
        <title>Complete genomes of two clinical Staphylococcus aureus strains: evidence for the rapid evolution of virulence and drug resistance.</title>
        <authorList>
            <person name="Holden M.T.G."/>
            <person name="Feil E.J."/>
            <person name="Lindsay J.A."/>
            <person name="Peacock S.J."/>
            <person name="Day N.P.J."/>
            <person name="Enright M.C."/>
            <person name="Foster T.J."/>
            <person name="Moore C.E."/>
            <person name="Hurst L."/>
            <person name="Atkin R."/>
            <person name="Barron A."/>
            <person name="Bason N."/>
            <person name="Bentley S.D."/>
            <person name="Chillingworth C."/>
            <person name="Chillingworth T."/>
            <person name="Churcher C."/>
            <person name="Clark L."/>
            <person name="Corton C."/>
            <person name="Cronin A."/>
            <person name="Doggett J."/>
            <person name="Dowd L."/>
            <person name="Feltwell T."/>
            <person name="Hance Z."/>
            <person name="Harris B."/>
            <person name="Hauser H."/>
            <person name="Holroyd S."/>
            <person name="Jagels K."/>
            <person name="James K.D."/>
            <person name="Lennard N."/>
            <person name="Line A."/>
            <person name="Mayes R."/>
            <person name="Moule S."/>
            <person name="Mungall K."/>
            <person name="Ormond D."/>
            <person name="Quail M.A."/>
            <person name="Rabbinowitsch E."/>
            <person name="Rutherford K.M."/>
            <person name="Sanders M."/>
            <person name="Sharp S."/>
            <person name="Simmonds M."/>
            <person name="Stevens K."/>
            <person name="Whitehead S."/>
            <person name="Barrell B.G."/>
            <person name="Spratt B.G."/>
            <person name="Parkhill J."/>
        </authorList>
    </citation>
    <scope>NUCLEOTIDE SEQUENCE [LARGE SCALE GENOMIC DNA]</scope>
    <source>
        <strain>MSSA476</strain>
    </source>
</reference>